<evidence type="ECO:0000255" key="1"/>
<evidence type="ECO:0000269" key="2">
    <source>
    </source>
</evidence>
<evidence type="ECO:0000305" key="3"/>
<keyword id="KW-1003">Cell membrane</keyword>
<keyword id="KW-0472">Membrane</keyword>
<keyword id="KW-1185">Reference proteome</keyword>
<keyword id="KW-0812">Transmembrane</keyword>
<keyword id="KW-1133">Transmembrane helix</keyword>
<keyword id="KW-0813">Transport</keyword>
<organism>
    <name type="scientific">Bacillus subtilis (strain 168)</name>
    <dbReference type="NCBI Taxonomy" id="224308"/>
    <lineage>
        <taxon>Bacteria</taxon>
        <taxon>Bacillati</taxon>
        <taxon>Bacillota</taxon>
        <taxon>Bacilli</taxon>
        <taxon>Bacillales</taxon>
        <taxon>Bacillaceae</taxon>
        <taxon>Bacillus</taxon>
    </lineage>
</organism>
<reference key="1">
    <citation type="submission" date="1997-04" db="EMBL/GenBank/DDBJ databases">
        <authorList>
            <person name="Denizot F."/>
        </authorList>
    </citation>
    <scope>NUCLEOTIDE SEQUENCE [GENOMIC DNA]</scope>
    <source>
        <strain>168</strain>
    </source>
</reference>
<reference key="2">
    <citation type="journal article" date="1997" name="Nature">
        <title>The complete genome sequence of the Gram-positive bacterium Bacillus subtilis.</title>
        <authorList>
            <person name="Kunst F."/>
            <person name="Ogasawara N."/>
            <person name="Moszer I."/>
            <person name="Albertini A.M."/>
            <person name="Alloni G."/>
            <person name="Azevedo V."/>
            <person name="Bertero M.G."/>
            <person name="Bessieres P."/>
            <person name="Bolotin A."/>
            <person name="Borchert S."/>
            <person name="Borriss R."/>
            <person name="Boursier L."/>
            <person name="Brans A."/>
            <person name="Braun M."/>
            <person name="Brignell S.C."/>
            <person name="Bron S."/>
            <person name="Brouillet S."/>
            <person name="Bruschi C.V."/>
            <person name="Caldwell B."/>
            <person name="Capuano V."/>
            <person name="Carter N.M."/>
            <person name="Choi S.-K."/>
            <person name="Codani J.-J."/>
            <person name="Connerton I.F."/>
            <person name="Cummings N.J."/>
            <person name="Daniel R.A."/>
            <person name="Denizot F."/>
            <person name="Devine K.M."/>
            <person name="Duesterhoeft A."/>
            <person name="Ehrlich S.D."/>
            <person name="Emmerson P.T."/>
            <person name="Entian K.-D."/>
            <person name="Errington J."/>
            <person name="Fabret C."/>
            <person name="Ferrari E."/>
            <person name="Foulger D."/>
            <person name="Fritz C."/>
            <person name="Fujita M."/>
            <person name="Fujita Y."/>
            <person name="Fuma S."/>
            <person name="Galizzi A."/>
            <person name="Galleron N."/>
            <person name="Ghim S.-Y."/>
            <person name="Glaser P."/>
            <person name="Goffeau A."/>
            <person name="Golightly E.J."/>
            <person name="Grandi G."/>
            <person name="Guiseppi G."/>
            <person name="Guy B.J."/>
            <person name="Haga K."/>
            <person name="Haiech J."/>
            <person name="Harwood C.R."/>
            <person name="Henaut A."/>
            <person name="Hilbert H."/>
            <person name="Holsappel S."/>
            <person name="Hosono S."/>
            <person name="Hullo M.-F."/>
            <person name="Itaya M."/>
            <person name="Jones L.-M."/>
            <person name="Joris B."/>
            <person name="Karamata D."/>
            <person name="Kasahara Y."/>
            <person name="Klaerr-Blanchard M."/>
            <person name="Klein C."/>
            <person name="Kobayashi Y."/>
            <person name="Koetter P."/>
            <person name="Koningstein G."/>
            <person name="Krogh S."/>
            <person name="Kumano M."/>
            <person name="Kurita K."/>
            <person name="Lapidus A."/>
            <person name="Lardinois S."/>
            <person name="Lauber J."/>
            <person name="Lazarevic V."/>
            <person name="Lee S.-M."/>
            <person name="Levine A."/>
            <person name="Liu H."/>
            <person name="Masuda S."/>
            <person name="Mauel C."/>
            <person name="Medigue C."/>
            <person name="Medina N."/>
            <person name="Mellado R.P."/>
            <person name="Mizuno M."/>
            <person name="Moestl D."/>
            <person name="Nakai S."/>
            <person name="Noback M."/>
            <person name="Noone D."/>
            <person name="O'Reilly M."/>
            <person name="Ogawa K."/>
            <person name="Ogiwara A."/>
            <person name="Oudega B."/>
            <person name="Park S.-H."/>
            <person name="Parro V."/>
            <person name="Pohl T.M."/>
            <person name="Portetelle D."/>
            <person name="Porwollik S."/>
            <person name="Prescott A.M."/>
            <person name="Presecan E."/>
            <person name="Pujic P."/>
            <person name="Purnelle B."/>
            <person name="Rapoport G."/>
            <person name="Rey M."/>
            <person name="Reynolds S."/>
            <person name="Rieger M."/>
            <person name="Rivolta C."/>
            <person name="Rocha E."/>
            <person name="Roche B."/>
            <person name="Rose M."/>
            <person name="Sadaie Y."/>
            <person name="Sato T."/>
            <person name="Scanlan E."/>
            <person name="Schleich S."/>
            <person name="Schroeter R."/>
            <person name="Scoffone F."/>
            <person name="Sekiguchi J."/>
            <person name="Sekowska A."/>
            <person name="Seror S.J."/>
            <person name="Serror P."/>
            <person name="Shin B.-S."/>
            <person name="Soldo B."/>
            <person name="Sorokin A."/>
            <person name="Tacconi E."/>
            <person name="Takagi T."/>
            <person name="Takahashi H."/>
            <person name="Takemaru K."/>
            <person name="Takeuchi M."/>
            <person name="Tamakoshi A."/>
            <person name="Tanaka T."/>
            <person name="Terpstra P."/>
            <person name="Tognoni A."/>
            <person name="Tosato V."/>
            <person name="Uchiyama S."/>
            <person name="Vandenbol M."/>
            <person name="Vannier F."/>
            <person name="Vassarotti A."/>
            <person name="Viari A."/>
            <person name="Wambutt R."/>
            <person name="Wedler E."/>
            <person name="Wedler H."/>
            <person name="Weitzenegger T."/>
            <person name="Winters P."/>
            <person name="Wipat A."/>
            <person name="Yamamoto H."/>
            <person name="Yamane K."/>
            <person name="Yasumoto K."/>
            <person name="Yata K."/>
            <person name="Yoshida K."/>
            <person name="Yoshikawa H.-F."/>
            <person name="Zumstein E."/>
            <person name="Yoshikawa H."/>
            <person name="Danchin A."/>
        </authorList>
    </citation>
    <scope>NUCLEOTIDE SEQUENCE [LARGE SCALE GENOMIC DNA]</scope>
    <source>
        <strain>168</strain>
    </source>
</reference>
<reference key="3">
    <citation type="journal article" date="1996" name="Microbiology">
        <title>Integrated mapping and sequencing of a 115 kb DNA fragment from Bacillus subtilis: sequence analysis of a 21 kb segment containing the sigL locus.</title>
        <authorList>
            <person name="Fabret C."/>
            <person name="Quentin Y."/>
            <person name="Chapal N."/>
            <person name="Guiseppi A."/>
            <person name="Haiech J."/>
            <person name="Denizot F."/>
        </authorList>
    </citation>
    <scope>NUCLEOTIDE SEQUENCE [GENOMIC DNA] OF 51-563</scope>
    <source>
        <strain>168</strain>
    </source>
</reference>
<reference key="4">
    <citation type="journal article" date="2009" name="J. Bacteriol.">
        <title>A widely conserved gene cluster required for lactate utilization in Bacillus subtilis and its involvement in biofilm formation.</title>
        <authorList>
            <person name="Chai Y."/>
            <person name="Kolter R."/>
            <person name="Losick R."/>
        </authorList>
    </citation>
    <scope>FUNCTION AS A LACTATE PERMEASE</scope>
    <scope>DISRUPTION PHENOTYPE</scope>
    <source>
        <strain>3610</strain>
    </source>
</reference>
<sequence length="563" mass="59762">MQWTQAYTPIGGNLLLSALAALVPIIFFFWALAIKRMKGYTAGLATLGIALIIAVLVYRMPAEKALMSATQGAVYGLLPIGWIIVTSVFLYKITVKTGQFDIIRSSVLSITDDRRLQALLIAFSFGAFLEGAAGFGAPVAISAALLVGLGFNPLYAAGICLIANTAPVAFGAIGIPITAVEGPTGIPAMEISQMVGRQLPFLSVFIPLYLIIIMSGFRKALEIWPAILVSGVSFAVVQYLSSNFLGPELPDVLSALVSMAALAVFLKWWKPKTTFRFAGEQESAASIETARTNPAAPAYRGGQIFKAWSPFLLLTAMISVWGIPSVKSALTGHYEGSAVFLKWLNAVGEKLTFSPGVPFLNNQIVNADGTPIEAVYKLEVLGSAGTAILIAAVLSKFITAISWKDWGTVFKETVQELKLPILTIASVVGFAYVTNSSGMSTTLGMTLALTGSMFTFFSPVLGWLGVFITGSDTSANLLFGNLQKVTALSVGMDPVLSVAANSSGGVTGKMISPQSIAVACAAVGLAGKESDLFRFTIKHSLFLLLLVCIITFLQHHVFSWMIP</sequence>
<name>LUTP_BACSU</name>
<proteinExistence type="evidence at protein level"/>
<protein>
    <recommendedName>
        <fullName>L-lactate permease</fullName>
    </recommendedName>
</protein>
<gene>
    <name type="primary">lutP</name>
    <name type="synonym">yvfH</name>
    <name type="ordered locus">BSU34190</name>
</gene>
<feature type="chain" id="PRO_0000210381" description="L-lactate permease">
    <location>
        <begin position="1"/>
        <end position="563"/>
    </location>
</feature>
<feature type="transmembrane region" description="Helical" evidence="1">
    <location>
        <begin position="14"/>
        <end position="34"/>
    </location>
</feature>
<feature type="transmembrane region" description="Helical" evidence="1">
    <location>
        <begin position="37"/>
        <end position="57"/>
    </location>
</feature>
<feature type="transmembrane region" description="Helical" evidence="1">
    <location>
        <begin position="73"/>
        <end position="93"/>
    </location>
</feature>
<feature type="transmembrane region" description="Helical" evidence="1">
    <location>
        <begin position="131"/>
        <end position="151"/>
    </location>
</feature>
<feature type="transmembrane region" description="Helical" evidence="1">
    <location>
        <begin position="157"/>
        <end position="177"/>
    </location>
</feature>
<feature type="transmembrane region" description="Helical" evidence="1">
    <location>
        <begin position="194"/>
        <end position="214"/>
    </location>
</feature>
<feature type="transmembrane region" description="Helical" evidence="1">
    <location>
        <begin position="220"/>
        <end position="240"/>
    </location>
</feature>
<feature type="transmembrane region" description="Helical" evidence="1">
    <location>
        <begin position="249"/>
        <end position="269"/>
    </location>
</feature>
<feature type="transmembrane region" description="Helical" evidence="1">
    <location>
        <begin position="304"/>
        <end position="324"/>
    </location>
</feature>
<feature type="transmembrane region" description="Helical" evidence="1">
    <location>
        <begin position="381"/>
        <end position="401"/>
    </location>
</feature>
<feature type="transmembrane region" description="Helical" evidence="1">
    <location>
        <begin position="419"/>
        <end position="439"/>
    </location>
</feature>
<feature type="transmembrane region" description="Helical" evidence="1">
    <location>
        <begin position="448"/>
        <end position="468"/>
    </location>
</feature>
<feature type="transmembrane region" description="Helical" evidence="1">
    <location>
        <begin position="506"/>
        <end position="526"/>
    </location>
</feature>
<feature type="transmembrane region" description="Helical" evidence="1">
    <location>
        <begin position="542"/>
        <end position="562"/>
    </location>
</feature>
<dbReference type="EMBL" id="Z94043">
    <property type="protein sequence ID" value="CAB08002.1"/>
    <property type="molecule type" value="Genomic_DNA"/>
</dbReference>
<dbReference type="EMBL" id="AL009126">
    <property type="protein sequence ID" value="CAB15424.1"/>
    <property type="molecule type" value="Genomic_DNA"/>
</dbReference>
<dbReference type="EMBL" id="Z71928">
    <property type="protein sequence ID" value="CAA96486.1"/>
    <property type="molecule type" value="Genomic_DNA"/>
</dbReference>
<dbReference type="PIR" id="A70038">
    <property type="entry name" value="A70038"/>
</dbReference>
<dbReference type="RefSeq" id="NP_391299.1">
    <property type="nucleotide sequence ID" value="NC_000964.3"/>
</dbReference>
<dbReference type="RefSeq" id="WP_003228275.1">
    <property type="nucleotide sequence ID" value="NZ_OZ025638.1"/>
</dbReference>
<dbReference type="FunCoup" id="P71067">
    <property type="interactions" value="28"/>
</dbReference>
<dbReference type="STRING" id="224308.BSU34190"/>
<dbReference type="TCDB" id="2.A.14.1.3">
    <property type="family name" value="the lactate permease (lctp) family"/>
</dbReference>
<dbReference type="PaxDb" id="224308-BSU34190"/>
<dbReference type="EnsemblBacteria" id="CAB15424">
    <property type="protein sequence ID" value="CAB15424"/>
    <property type="gene ID" value="BSU_34190"/>
</dbReference>
<dbReference type="GeneID" id="936322"/>
<dbReference type="KEGG" id="bsu:BSU34190"/>
<dbReference type="PATRIC" id="fig|224308.179.peg.3706"/>
<dbReference type="eggNOG" id="COG1620">
    <property type="taxonomic scope" value="Bacteria"/>
</dbReference>
<dbReference type="InParanoid" id="P71067"/>
<dbReference type="OrthoDB" id="9761056at2"/>
<dbReference type="PhylomeDB" id="P71067"/>
<dbReference type="BioCyc" id="BSUB:BSU34190-MONOMER"/>
<dbReference type="Proteomes" id="UP000001570">
    <property type="component" value="Chromosome"/>
</dbReference>
<dbReference type="GO" id="GO:0005886">
    <property type="term" value="C:plasma membrane"/>
    <property type="evidence" value="ECO:0000318"/>
    <property type="project" value="GO_Central"/>
</dbReference>
<dbReference type="GO" id="GO:0015129">
    <property type="term" value="F:lactate transmembrane transporter activity"/>
    <property type="evidence" value="ECO:0007669"/>
    <property type="project" value="InterPro"/>
</dbReference>
<dbReference type="GO" id="GO:0015295">
    <property type="term" value="F:solute:proton symporter activity"/>
    <property type="evidence" value="ECO:0000318"/>
    <property type="project" value="GO_Central"/>
</dbReference>
<dbReference type="InterPro" id="IPR003804">
    <property type="entry name" value="Lactate_perm"/>
</dbReference>
<dbReference type="NCBIfam" id="TIGR00795">
    <property type="entry name" value="lctP"/>
    <property type="match status" value="1"/>
</dbReference>
<dbReference type="PANTHER" id="PTHR30003:SF0">
    <property type="entry name" value="GLYCOLATE PERMEASE GLCA-RELATED"/>
    <property type="match status" value="1"/>
</dbReference>
<dbReference type="PANTHER" id="PTHR30003">
    <property type="entry name" value="L-LACTATE PERMEASE"/>
    <property type="match status" value="1"/>
</dbReference>
<dbReference type="Pfam" id="PF02652">
    <property type="entry name" value="Lactate_perm"/>
    <property type="match status" value="1"/>
</dbReference>
<accession>P71067</accession>
<comment type="function">
    <text evidence="2">Is the principal permease for the uptake of L-lactate in B.subtilis.</text>
</comment>
<comment type="subcellular location">
    <subcellularLocation>
        <location evidence="3">Cell membrane</location>
        <topology evidence="3">Multi-pass membrane protein</topology>
    </subcellularLocation>
</comment>
<comment type="disruption phenotype">
    <text evidence="2">Cells lacking this gene are markedly impaired (but not totally blocked) in growth on L-lactate minimal medium but not impaired in growth on glucose minimal medium.</text>
</comment>
<comment type="similarity">
    <text evidence="3">Belongs to the lactate permease family.</text>
</comment>